<accession>Q60235</accession>
<name>HRCQB_PSESY</name>
<dbReference type="EMBL" id="U25812">
    <property type="protein sequence ID" value="AAB05074.1"/>
    <property type="molecule type" value="Genomic_DNA"/>
</dbReference>
<dbReference type="SMR" id="Q60235"/>
<dbReference type="GO" id="GO:0009425">
    <property type="term" value="C:bacterial-type flagellum basal body"/>
    <property type="evidence" value="ECO:0007669"/>
    <property type="project" value="InterPro"/>
</dbReference>
<dbReference type="GO" id="GO:0005737">
    <property type="term" value="C:cytoplasm"/>
    <property type="evidence" value="ECO:0007669"/>
    <property type="project" value="UniProtKB-SubCell"/>
</dbReference>
<dbReference type="GO" id="GO:0003774">
    <property type="term" value="F:cytoskeletal motor activity"/>
    <property type="evidence" value="ECO:0007669"/>
    <property type="project" value="InterPro"/>
</dbReference>
<dbReference type="GO" id="GO:0071978">
    <property type="term" value="P:bacterial-type flagellum-dependent swarming motility"/>
    <property type="evidence" value="ECO:0007669"/>
    <property type="project" value="TreeGrafter"/>
</dbReference>
<dbReference type="GO" id="GO:0050918">
    <property type="term" value="P:positive chemotaxis"/>
    <property type="evidence" value="ECO:0007669"/>
    <property type="project" value="TreeGrafter"/>
</dbReference>
<dbReference type="Gene3D" id="2.30.330.10">
    <property type="entry name" value="SpoA-like"/>
    <property type="match status" value="1"/>
</dbReference>
<dbReference type="InterPro" id="IPR001543">
    <property type="entry name" value="FliN-like_C"/>
</dbReference>
<dbReference type="InterPro" id="IPR001172">
    <property type="entry name" value="FliN_T3SS_HrcQb"/>
</dbReference>
<dbReference type="InterPro" id="IPR036429">
    <property type="entry name" value="SpoA-like_sf"/>
</dbReference>
<dbReference type="PANTHER" id="PTHR30034">
    <property type="entry name" value="FLAGELLAR MOTOR SWITCH PROTEIN FLIM"/>
    <property type="match status" value="1"/>
</dbReference>
<dbReference type="PANTHER" id="PTHR30034:SF6">
    <property type="entry name" value="YOP PROTEINS TRANSLOCATION PROTEIN Q"/>
    <property type="match status" value="1"/>
</dbReference>
<dbReference type="Pfam" id="PF01052">
    <property type="entry name" value="FliMN_C"/>
    <property type="match status" value="1"/>
</dbReference>
<dbReference type="PRINTS" id="PR00956">
    <property type="entry name" value="FLGMOTORFLIN"/>
</dbReference>
<dbReference type="SUPFAM" id="SSF101801">
    <property type="entry name" value="Surface presentation of antigens (SPOA)"/>
    <property type="match status" value="1"/>
</dbReference>
<sequence>MSTEDLYQDDVEMLDDYEEPVPEQADQQQRDDEYAEHAFGYADSDAEHEEQSGDHHESPMLDSLELDLTLRCGDLRLTLAELRRLDAGSILEVSGIAPGHATLCHGEQVVAEGELVDVEGRLGLQITRLVARS</sequence>
<gene>
    <name type="primary">hrcQb</name>
    <name type="synonym">hrpU</name>
</gene>
<comment type="function">
    <text evidence="1 3">Component of the type III secretion system, which is required for effector protein delivery, parasitism, and pathogenicity. Probably participates in the formation of a C-ring-like assembly along with HrcQa (By similarity).</text>
</comment>
<comment type="subunit">
    <text evidence="1">Homotetramer. The four monomers assemble into two tightly bound homodimers. Interacts with HrcQa (By similarity).</text>
</comment>
<comment type="subcellular location">
    <subcellularLocation>
        <location evidence="1">Cytoplasm</location>
    </subcellularLocation>
    <text evidence="1">Or loosely associated with a membrane component, probably HrcQa.</text>
</comment>
<comment type="induction">
    <text>Negatively regulated by HrpV.</text>
</comment>
<comment type="domain">
    <text evidence="1">The HrcQb-C domain interacts with the HrcQa C-terminal domain.</text>
</comment>
<comment type="similarity">
    <text evidence="4">Belongs to the FliN/MopA/SpaO family.</text>
</comment>
<reference key="1">
    <citation type="journal article" date="1995" name="Mol. Plant Microbe Interact.">
        <title>The complete hrp gene cluster of Pseudomonas syringae pv. syringae 61 includes two blocks of genes required for harpinPss secretion that are arranged colinearly with Yersinia ysc homologs.</title>
        <authorList>
            <person name="Huang H.-C."/>
            <person name="Lin R.-H."/>
            <person name="Chang C.-J."/>
            <person name="Collmer A."/>
            <person name="Deng W.-L."/>
        </authorList>
    </citation>
    <scope>NUCLEOTIDE SEQUENCE [GENOMIC DNA]</scope>
    <source>
        <strain>Pss61</strain>
    </source>
</reference>
<reference key="2">
    <citation type="journal article" date="1997" name="J. Bacteriol.">
        <title>Altered localization of HrpZ in Pseudomonas syringae pv. syringae hrp mutants suggests that different components of the type III secretion pathway control protein translocation across the inner and outer membranes of Gram-negative bacteria.</title>
        <authorList>
            <person name="Charkowski A.O."/>
            <person name="Huang H.-C."/>
            <person name="Collmer A."/>
        </authorList>
    </citation>
    <scope>FUNCTION</scope>
    <source>
        <strain>Pss61</strain>
    </source>
</reference>
<reference key="3">
    <citation type="journal article" date="1998" name="J. Bacteriol.">
        <title>Negative regulation of hrp genes in Pseudomonas syringae by HrpV.</title>
        <authorList>
            <person name="Preston G."/>
            <person name="Deng W.-L."/>
            <person name="Huang H.-C."/>
            <person name="Collmer A."/>
        </authorList>
    </citation>
    <scope>REGULATION</scope>
    <source>
        <strain>Pss61</strain>
    </source>
</reference>
<evidence type="ECO:0000250" key="1"/>
<evidence type="ECO:0000256" key="2">
    <source>
        <dbReference type="SAM" id="MobiDB-lite"/>
    </source>
</evidence>
<evidence type="ECO:0000269" key="3">
    <source>
    </source>
</evidence>
<evidence type="ECO:0000305" key="4"/>
<keyword id="KW-0963">Cytoplasm</keyword>
<keyword id="KW-0843">Virulence</keyword>
<protein>
    <recommendedName>
        <fullName>Type III secretion protein HrcQb</fullName>
    </recommendedName>
</protein>
<proteinExistence type="evidence at transcript level"/>
<organism>
    <name type="scientific">Pseudomonas syringae pv. syringae</name>
    <dbReference type="NCBI Taxonomy" id="321"/>
    <lineage>
        <taxon>Bacteria</taxon>
        <taxon>Pseudomonadati</taxon>
        <taxon>Pseudomonadota</taxon>
        <taxon>Gammaproteobacteria</taxon>
        <taxon>Pseudomonadales</taxon>
        <taxon>Pseudomonadaceae</taxon>
        <taxon>Pseudomonas</taxon>
        <taxon>Pseudomonas syringae</taxon>
    </lineage>
</organism>
<feature type="chain" id="PRO_0000184136" description="Type III secretion protein HrcQb">
    <location>
        <begin position="1"/>
        <end position="133"/>
    </location>
</feature>
<feature type="region of interest" description="Disordered" evidence="2">
    <location>
        <begin position="1"/>
        <end position="60"/>
    </location>
</feature>
<feature type="compositionally biased region" description="Acidic residues" evidence="2">
    <location>
        <begin position="1"/>
        <end position="21"/>
    </location>
</feature>
<feature type="compositionally biased region" description="Basic and acidic residues" evidence="2">
    <location>
        <begin position="49"/>
        <end position="59"/>
    </location>
</feature>